<gene>
    <name evidence="1" type="primary">mscL</name>
    <name type="ordered locus">EcSMS35_3586</name>
</gene>
<keyword id="KW-0997">Cell inner membrane</keyword>
<keyword id="KW-1003">Cell membrane</keyword>
<keyword id="KW-0407">Ion channel</keyword>
<keyword id="KW-0406">Ion transport</keyword>
<keyword id="KW-0472">Membrane</keyword>
<keyword id="KW-0812">Transmembrane</keyword>
<keyword id="KW-1133">Transmembrane helix</keyword>
<keyword id="KW-0813">Transport</keyword>
<sequence>MSIIKEFREFAMRGNVVDLAVGVIIGAAFGKIVSSLVADIIMPPLGLLIGGIDFKQFAVTLRDAQGDIPAVVMHYGVFIQNVFDFLIVAFAIFMAIKLINKLNRKKEEPAAAPAPTKEEVLLTEIRDLLKEQNNRS</sequence>
<name>MSCL_ECOSM</name>
<accession>B1LGP7</accession>
<proteinExistence type="inferred from homology"/>
<organism>
    <name type="scientific">Escherichia coli (strain SMS-3-5 / SECEC)</name>
    <dbReference type="NCBI Taxonomy" id="439855"/>
    <lineage>
        <taxon>Bacteria</taxon>
        <taxon>Pseudomonadati</taxon>
        <taxon>Pseudomonadota</taxon>
        <taxon>Gammaproteobacteria</taxon>
        <taxon>Enterobacterales</taxon>
        <taxon>Enterobacteriaceae</taxon>
        <taxon>Escherichia</taxon>
    </lineage>
</organism>
<feature type="chain" id="PRO_1000191365" description="Large-conductance mechanosensitive channel">
    <location>
        <begin position="1"/>
        <end position="136"/>
    </location>
</feature>
<feature type="transmembrane region" description="Helical" evidence="1">
    <location>
        <begin position="10"/>
        <end position="30"/>
    </location>
</feature>
<feature type="transmembrane region" description="Helical" evidence="1">
    <location>
        <begin position="76"/>
        <end position="96"/>
    </location>
</feature>
<reference key="1">
    <citation type="journal article" date="2008" name="J. Bacteriol.">
        <title>Insights into the environmental resistance gene pool from the genome sequence of the multidrug-resistant environmental isolate Escherichia coli SMS-3-5.</title>
        <authorList>
            <person name="Fricke W.F."/>
            <person name="Wright M.S."/>
            <person name="Lindell A.H."/>
            <person name="Harkins D.M."/>
            <person name="Baker-Austin C."/>
            <person name="Ravel J."/>
            <person name="Stepanauskas R."/>
        </authorList>
    </citation>
    <scope>NUCLEOTIDE SEQUENCE [LARGE SCALE GENOMIC DNA]</scope>
    <source>
        <strain>SMS-3-5 / SECEC</strain>
    </source>
</reference>
<dbReference type="EMBL" id="CP000970">
    <property type="protein sequence ID" value="ACB16073.1"/>
    <property type="molecule type" value="Genomic_DNA"/>
</dbReference>
<dbReference type="RefSeq" id="WP_000022442.1">
    <property type="nucleotide sequence ID" value="NC_010498.1"/>
</dbReference>
<dbReference type="SMR" id="B1LGP7"/>
<dbReference type="GeneID" id="75173461"/>
<dbReference type="KEGG" id="ecm:EcSMS35_3586"/>
<dbReference type="HOGENOM" id="CLU_095787_0_0_6"/>
<dbReference type="Proteomes" id="UP000007011">
    <property type="component" value="Chromosome"/>
</dbReference>
<dbReference type="GO" id="GO:0005886">
    <property type="term" value="C:plasma membrane"/>
    <property type="evidence" value="ECO:0007669"/>
    <property type="project" value="UniProtKB-SubCell"/>
</dbReference>
<dbReference type="GO" id="GO:0008381">
    <property type="term" value="F:mechanosensitive monoatomic ion channel activity"/>
    <property type="evidence" value="ECO:0007669"/>
    <property type="project" value="UniProtKB-UniRule"/>
</dbReference>
<dbReference type="FunFam" id="1.10.1200.120:FF:000001">
    <property type="entry name" value="Large-conductance mechanosensitive channel"/>
    <property type="match status" value="1"/>
</dbReference>
<dbReference type="Gene3D" id="1.10.1200.120">
    <property type="entry name" value="Large-conductance mechanosensitive channel, MscL, domain 1"/>
    <property type="match status" value="1"/>
</dbReference>
<dbReference type="HAMAP" id="MF_00115">
    <property type="entry name" value="MscL"/>
    <property type="match status" value="1"/>
</dbReference>
<dbReference type="InterPro" id="IPR019823">
    <property type="entry name" value="Mechanosensitive_channel_CS"/>
</dbReference>
<dbReference type="InterPro" id="IPR001185">
    <property type="entry name" value="MS_channel"/>
</dbReference>
<dbReference type="InterPro" id="IPR037673">
    <property type="entry name" value="MSC/AndL"/>
</dbReference>
<dbReference type="InterPro" id="IPR036019">
    <property type="entry name" value="MscL_channel"/>
</dbReference>
<dbReference type="NCBIfam" id="TIGR00220">
    <property type="entry name" value="mscL"/>
    <property type="match status" value="1"/>
</dbReference>
<dbReference type="NCBIfam" id="NF001841">
    <property type="entry name" value="PRK00567.1-1"/>
    <property type="match status" value="1"/>
</dbReference>
<dbReference type="NCBIfam" id="NF001843">
    <property type="entry name" value="PRK00567.1-4"/>
    <property type="match status" value="1"/>
</dbReference>
<dbReference type="PANTHER" id="PTHR30266:SF2">
    <property type="entry name" value="LARGE-CONDUCTANCE MECHANOSENSITIVE CHANNEL"/>
    <property type="match status" value="1"/>
</dbReference>
<dbReference type="PANTHER" id="PTHR30266">
    <property type="entry name" value="MECHANOSENSITIVE CHANNEL MSCL"/>
    <property type="match status" value="1"/>
</dbReference>
<dbReference type="Pfam" id="PF01741">
    <property type="entry name" value="MscL"/>
    <property type="match status" value="1"/>
</dbReference>
<dbReference type="PRINTS" id="PR01264">
    <property type="entry name" value="MECHCHANNEL"/>
</dbReference>
<dbReference type="SUPFAM" id="SSF81330">
    <property type="entry name" value="Gated mechanosensitive channel"/>
    <property type="match status" value="1"/>
</dbReference>
<dbReference type="PROSITE" id="PS01327">
    <property type="entry name" value="MSCL"/>
    <property type="match status" value="1"/>
</dbReference>
<evidence type="ECO:0000255" key="1">
    <source>
        <dbReference type="HAMAP-Rule" id="MF_00115"/>
    </source>
</evidence>
<comment type="function">
    <text evidence="1">Channel that opens in response to stretch forces in the membrane lipid bilayer. May participate in the regulation of osmotic pressure changes within the cell.</text>
</comment>
<comment type="subunit">
    <text evidence="1">Homopentamer.</text>
</comment>
<comment type="subcellular location">
    <subcellularLocation>
        <location evidence="1">Cell inner membrane</location>
        <topology evidence="1">Multi-pass membrane protein</topology>
    </subcellularLocation>
</comment>
<comment type="similarity">
    <text evidence="1">Belongs to the MscL family.</text>
</comment>
<protein>
    <recommendedName>
        <fullName evidence="1">Large-conductance mechanosensitive channel</fullName>
    </recommendedName>
</protein>